<protein>
    <recommendedName>
        <fullName evidence="1">tRNA pseudouridine synthase A</fullName>
        <ecNumber evidence="1">5.4.99.12</ecNumber>
    </recommendedName>
    <alternativeName>
        <fullName evidence="1">tRNA pseudouridine(38-40) synthase</fullName>
    </alternativeName>
    <alternativeName>
        <fullName evidence="1">tRNA pseudouridylate synthase I</fullName>
    </alternativeName>
    <alternativeName>
        <fullName evidence="1">tRNA-uridine isomerase I</fullName>
    </alternativeName>
</protein>
<name>TRUA_METC4</name>
<sequence length="250" mass="27957">MPRYKLVIEYDGAPFRGWQRQADDPTVQAAIETAVTRFSGETARLTCAGRTDAGVHAIHQVAHLDLAKDWRTDTVRDALNAHLRPQPVSILSAEVVPQEFDARHSAIRRHYRYRILNRRSPAALTRAHVWQVPWPLDAELMHRAAQRLLGHHDFSAFRAAECQAKSPMRTLEQLDVTRERMGLFEEIVIATSARSFLHHQVRAMAGTLMLAGCKRLSADDVAEILATGAKHRCGPLAPACGLTFVGVDYL</sequence>
<feature type="chain" id="PRO_1000194561" description="tRNA pseudouridine synthase A">
    <location>
        <begin position="1"/>
        <end position="250"/>
    </location>
</feature>
<feature type="active site" description="Nucleophile" evidence="1">
    <location>
        <position position="52"/>
    </location>
</feature>
<feature type="binding site" evidence="1">
    <location>
        <position position="111"/>
    </location>
    <ligand>
        <name>substrate</name>
    </ligand>
</feature>
<organism>
    <name type="scientific">Methylorubrum extorquens (strain CM4 / NCIMB 13688)</name>
    <name type="common">Methylobacterium extorquens</name>
    <dbReference type="NCBI Taxonomy" id="440085"/>
    <lineage>
        <taxon>Bacteria</taxon>
        <taxon>Pseudomonadati</taxon>
        <taxon>Pseudomonadota</taxon>
        <taxon>Alphaproteobacteria</taxon>
        <taxon>Hyphomicrobiales</taxon>
        <taxon>Methylobacteriaceae</taxon>
        <taxon>Methylorubrum</taxon>
    </lineage>
</organism>
<proteinExistence type="inferred from homology"/>
<gene>
    <name evidence="1" type="primary">truA</name>
    <name type="ordered locus">Mchl_1916</name>
</gene>
<reference key="1">
    <citation type="submission" date="2008-12" db="EMBL/GenBank/DDBJ databases">
        <title>Complete sequence of chromosome of Methylobacterium chloromethanicum CM4.</title>
        <authorList>
            <consortium name="US DOE Joint Genome Institute"/>
            <person name="Lucas S."/>
            <person name="Copeland A."/>
            <person name="Lapidus A."/>
            <person name="Glavina del Rio T."/>
            <person name="Dalin E."/>
            <person name="Tice H."/>
            <person name="Bruce D."/>
            <person name="Goodwin L."/>
            <person name="Pitluck S."/>
            <person name="Chertkov O."/>
            <person name="Brettin T."/>
            <person name="Detter J.C."/>
            <person name="Han C."/>
            <person name="Larimer F."/>
            <person name="Land M."/>
            <person name="Hauser L."/>
            <person name="Kyrpides N."/>
            <person name="Mikhailova N."/>
            <person name="Marx C."/>
            <person name="Richardson P."/>
        </authorList>
    </citation>
    <scope>NUCLEOTIDE SEQUENCE [LARGE SCALE GENOMIC DNA]</scope>
    <source>
        <strain>CM4 / NCIMB 13688</strain>
    </source>
</reference>
<keyword id="KW-0413">Isomerase</keyword>
<keyword id="KW-0819">tRNA processing</keyword>
<accession>B7KVW3</accession>
<evidence type="ECO:0000255" key="1">
    <source>
        <dbReference type="HAMAP-Rule" id="MF_00171"/>
    </source>
</evidence>
<comment type="function">
    <text evidence="1">Formation of pseudouridine at positions 38, 39 and 40 in the anticodon stem and loop of transfer RNAs.</text>
</comment>
<comment type="catalytic activity">
    <reaction evidence="1">
        <text>uridine(38/39/40) in tRNA = pseudouridine(38/39/40) in tRNA</text>
        <dbReference type="Rhea" id="RHEA:22376"/>
        <dbReference type="Rhea" id="RHEA-COMP:10085"/>
        <dbReference type="Rhea" id="RHEA-COMP:10087"/>
        <dbReference type="ChEBI" id="CHEBI:65314"/>
        <dbReference type="ChEBI" id="CHEBI:65315"/>
        <dbReference type="EC" id="5.4.99.12"/>
    </reaction>
</comment>
<comment type="subunit">
    <text evidence="1">Homodimer.</text>
</comment>
<comment type="similarity">
    <text evidence="1">Belongs to the tRNA pseudouridine synthase TruA family.</text>
</comment>
<dbReference type="EC" id="5.4.99.12" evidence="1"/>
<dbReference type="EMBL" id="CP001298">
    <property type="protein sequence ID" value="ACK82779.1"/>
    <property type="molecule type" value="Genomic_DNA"/>
</dbReference>
<dbReference type="RefSeq" id="WP_015950518.1">
    <property type="nucleotide sequence ID" value="NC_011757.1"/>
</dbReference>
<dbReference type="SMR" id="B7KVW3"/>
<dbReference type="KEGG" id="mch:Mchl_1916"/>
<dbReference type="HOGENOM" id="CLU_014673_0_2_5"/>
<dbReference type="Proteomes" id="UP000002385">
    <property type="component" value="Chromosome"/>
</dbReference>
<dbReference type="GO" id="GO:0003723">
    <property type="term" value="F:RNA binding"/>
    <property type="evidence" value="ECO:0007669"/>
    <property type="project" value="InterPro"/>
</dbReference>
<dbReference type="GO" id="GO:0160147">
    <property type="term" value="F:tRNA pseudouridine(38-40) synthase activity"/>
    <property type="evidence" value="ECO:0007669"/>
    <property type="project" value="UniProtKB-EC"/>
</dbReference>
<dbReference type="GO" id="GO:0031119">
    <property type="term" value="P:tRNA pseudouridine synthesis"/>
    <property type="evidence" value="ECO:0007669"/>
    <property type="project" value="UniProtKB-UniRule"/>
</dbReference>
<dbReference type="CDD" id="cd02570">
    <property type="entry name" value="PseudoU_synth_EcTruA"/>
    <property type="match status" value="1"/>
</dbReference>
<dbReference type="FunFam" id="3.30.70.580:FF:000001">
    <property type="entry name" value="tRNA pseudouridine synthase A"/>
    <property type="match status" value="1"/>
</dbReference>
<dbReference type="Gene3D" id="3.30.70.660">
    <property type="entry name" value="Pseudouridine synthase I, catalytic domain, C-terminal subdomain"/>
    <property type="match status" value="1"/>
</dbReference>
<dbReference type="Gene3D" id="3.30.70.580">
    <property type="entry name" value="Pseudouridine synthase I, catalytic domain, N-terminal subdomain"/>
    <property type="match status" value="1"/>
</dbReference>
<dbReference type="HAMAP" id="MF_00171">
    <property type="entry name" value="TruA"/>
    <property type="match status" value="1"/>
</dbReference>
<dbReference type="InterPro" id="IPR020103">
    <property type="entry name" value="PsdUridine_synth_cat_dom_sf"/>
</dbReference>
<dbReference type="InterPro" id="IPR001406">
    <property type="entry name" value="PsdUridine_synth_TruA"/>
</dbReference>
<dbReference type="InterPro" id="IPR020097">
    <property type="entry name" value="PsdUridine_synth_TruA_a/b_dom"/>
</dbReference>
<dbReference type="InterPro" id="IPR020095">
    <property type="entry name" value="PsdUridine_synth_TruA_C"/>
</dbReference>
<dbReference type="InterPro" id="IPR020094">
    <property type="entry name" value="TruA/RsuA/RluB/E/F_N"/>
</dbReference>
<dbReference type="NCBIfam" id="TIGR00071">
    <property type="entry name" value="hisT_truA"/>
    <property type="match status" value="1"/>
</dbReference>
<dbReference type="PANTHER" id="PTHR11142">
    <property type="entry name" value="PSEUDOURIDYLATE SYNTHASE"/>
    <property type="match status" value="1"/>
</dbReference>
<dbReference type="PANTHER" id="PTHR11142:SF0">
    <property type="entry name" value="TRNA PSEUDOURIDINE SYNTHASE-LIKE 1"/>
    <property type="match status" value="1"/>
</dbReference>
<dbReference type="Pfam" id="PF01416">
    <property type="entry name" value="PseudoU_synth_1"/>
    <property type="match status" value="2"/>
</dbReference>
<dbReference type="PIRSF" id="PIRSF001430">
    <property type="entry name" value="tRNA_psdUrid_synth"/>
    <property type="match status" value="1"/>
</dbReference>
<dbReference type="SUPFAM" id="SSF55120">
    <property type="entry name" value="Pseudouridine synthase"/>
    <property type="match status" value="1"/>
</dbReference>